<dbReference type="EC" id="3.6.5.3" evidence="2"/>
<dbReference type="EMBL" id="CP000745">
    <property type="protein sequence ID" value="ABR65682.1"/>
    <property type="molecule type" value="Genomic_DNA"/>
</dbReference>
<dbReference type="SMR" id="A6VGV6"/>
<dbReference type="STRING" id="426368.MmarC7_0615"/>
<dbReference type="KEGG" id="mmz:MmarC7_0615"/>
<dbReference type="eggNOG" id="arCOG01561">
    <property type="taxonomic scope" value="Archaea"/>
</dbReference>
<dbReference type="HOGENOM" id="CLU_007265_3_5_2"/>
<dbReference type="OrthoDB" id="371718at2157"/>
<dbReference type="GO" id="GO:0005737">
    <property type="term" value="C:cytoplasm"/>
    <property type="evidence" value="ECO:0007669"/>
    <property type="project" value="UniProtKB-SubCell"/>
</dbReference>
<dbReference type="GO" id="GO:0005525">
    <property type="term" value="F:GTP binding"/>
    <property type="evidence" value="ECO:0007669"/>
    <property type="project" value="UniProtKB-UniRule"/>
</dbReference>
<dbReference type="GO" id="GO:0003924">
    <property type="term" value="F:GTPase activity"/>
    <property type="evidence" value="ECO:0007669"/>
    <property type="project" value="InterPro"/>
</dbReference>
<dbReference type="GO" id="GO:0003746">
    <property type="term" value="F:translation elongation factor activity"/>
    <property type="evidence" value="ECO:0007669"/>
    <property type="project" value="UniProtKB-UniRule"/>
</dbReference>
<dbReference type="CDD" id="cd01883">
    <property type="entry name" value="EF1_alpha"/>
    <property type="match status" value="1"/>
</dbReference>
<dbReference type="CDD" id="cd03693">
    <property type="entry name" value="EF1_alpha_II"/>
    <property type="match status" value="1"/>
</dbReference>
<dbReference type="CDD" id="cd03705">
    <property type="entry name" value="EF1_alpha_III"/>
    <property type="match status" value="1"/>
</dbReference>
<dbReference type="FunFam" id="2.40.30.10:FF:000003">
    <property type="entry name" value="Elongation factor 1-alpha"/>
    <property type="match status" value="1"/>
</dbReference>
<dbReference type="FunFam" id="2.40.30.10:FF:000005">
    <property type="entry name" value="Elongation factor 1-alpha"/>
    <property type="match status" value="1"/>
</dbReference>
<dbReference type="Gene3D" id="3.40.50.300">
    <property type="entry name" value="P-loop containing nucleotide triphosphate hydrolases"/>
    <property type="match status" value="1"/>
</dbReference>
<dbReference type="Gene3D" id="2.40.30.10">
    <property type="entry name" value="Translation factors"/>
    <property type="match status" value="2"/>
</dbReference>
<dbReference type="HAMAP" id="MF_00118_A">
    <property type="entry name" value="EF_Tu_A"/>
    <property type="match status" value="1"/>
</dbReference>
<dbReference type="InterPro" id="IPR004161">
    <property type="entry name" value="EFTu-like_2"/>
</dbReference>
<dbReference type="InterPro" id="IPR029459">
    <property type="entry name" value="EFTU-type"/>
</dbReference>
<dbReference type="InterPro" id="IPR031157">
    <property type="entry name" value="G_TR_CS"/>
</dbReference>
<dbReference type="InterPro" id="IPR054696">
    <property type="entry name" value="GTP-eEF1A_C"/>
</dbReference>
<dbReference type="InterPro" id="IPR027417">
    <property type="entry name" value="P-loop_NTPase"/>
</dbReference>
<dbReference type="InterPro" id="IPR005225">
    <property type="entry name" value="Small_GTP-bd"/>
</dbReference>
<dbReference type="InterPro" id="IPR000795">
    <property type="entry name" value="T_Tr_GTP-bd_dom"/>
</dbReference>
<dbReference type="InterPro" id="IPR050100">
    <property type="entry name" value="TRAFAC_GTPase_members"/>
</dbReference>
<dbReference type="InterPro" id="IPR009000">
    <property type="entry name" value="Transl_B-barrel_sf"/>
</dbReference>
<dbReference type="InterPro" id="IPR009001">
    <property type="entry name" value="Transl_elong_EF1A/Init_IF2_C"/>
</dbReference>
<dbReference type="InterPro" id="IPR004539">
    <property type="entry name" value="Transl_elong_EF1A_euk/arc"/>
</dbReference>
<dbReference type="NCBIfam" id="TIGR00483">
    <property type="entry name" value="EF-1_alpha"/>
    <property type="match status" value="1"/>
</dbReference>
<dbReference type="NCBIfam" id="NF008969">
    <property type="entry name" value="PRK12317.1"/>
    <property type="match status" value="1"/>
</dbReference>
<dbReference type="NCBIfam" id="TIGR00231">
    <property type="entry name" value="small_GTP"/>
    <property type="match status" value="1"/>
</dbReference>
<dbReference type="PANTHER" id="PTHR23115">
    <property type="entry name" value="TRANSLATION FACTOR"/>
    <property type="match status" value="1"/>
</dbReference>
<dbReference type="Pfam" id="PF22594">
    <property type="entry name" value="GTP-eEF1A_C"/>
    <property type="match status" value="1"/>
</dbReference>
<dbReference type="Pfam" id="PF00009">
    <property type="entry name" value="GTP_EFTU"/>
    <property type="match status" value="1"/>
</dbReference>
<dbReference type="Pfam" id="PF03144">
    <property type="entry name" value="GTP_EFTU_D2"/>
    <property type="match status" value="1"/>
</dbReference>
<dbReference type="Pfam" id="PF14578">
    <property type="entry name" value="GTP_EFTU_D4"/>
    <property type="match status" value="1"/>
</dbReference>
<dbReference type="PRINTS" id="PR00315">
    <property type="entry name" value="ELONGATNFCT"/>
</dbReference>
<dbReference type="SUPFAM" id="SSF50465">
    <property type="entry name" value="EF-Tu/eEF-1alpha/eIF2-gamma C-terminal domain"/>
    <property type="match status" value="1"/>
</dbReference>
<dbReference type="SUPFAM" id="SSF52540">
    <property type="entry name" value="P-loop containing nucleoside triphosphate hydrolases"/>
    <property type="match status" value="1"/>
</dbReference>
<dbReference type="SUPFAM" id="SSF50447">
    <property type="entry name" value="Translation proteins"/>
    <property type="match status" value="1"/>
</dbReference>
<dbReference type="PROSITE" id="PS00301">
    <property type="entry name" value="G_TR_1"/>
    <property type="match status" value="1"/>
</dbReference>
<dbReference type="PROSITE" id="PS51722">
    <property type="entry name" value="G_TR_2"/>
    <property type="match status" value="1"/>
</dbReference>
<organism>
    <name type="scientific">Methanococcus maripaludis (strain C7 / ATCC BAA-1331)</name>
    <dbReference type="NCBI Taxonomy" id="426368"/>
    <lineage>
        <taxon>Archaea</taxon>
        <taxon>Methanobacteriati</taxon>
        <taxon>Methanobacteriota</taxon>
        <taxon>Methanomada group</taxon>
        <taxon>Methanococci</taxon>
        <taxon>Methanococcales</taxon>
        <taxon>Methanococcaceae</taxon>
        <taxon>Methanococcus</taxon>
    </lineage>
</organism>
<proteinExistence type="inferred from homology"/>
<protein>
    <recommendedName>
        <fullName evidence="2">Elongation factor 1-alpha</fullName>
        <shortName evidence="2">EF-1-alpha</shortName>
        <ecNumber evidence="2">3.6.5.3</ecNumber>
    </recommendedName>
    <alternativeName>
        <fullName evidence="2">Elongation factor Tu</fullName>
        <shortName evidence="2">EF-Tu</shortName>
    </alternativeName>
</protein>
<accession>A6VGV6</accession>
<reference key="1">
    <citation type="submission" date="2007-06" db="EMBL/GenBank/DDBJ databases">
        <title>Complete sequence of Methanococcus maripaludis C7.</title>
        <authorList>
            <consortium name="US DOE Joint Genome Institute"/>
            <person name="Copeland A."/>
            <person name="Lucas S."/>
            <person name="Lapidus A."/>
            <person name="Barry K."/>
            <person name="Glavina del Rio T."/>
            <person name="Dalin E."/>
            <person name="Tice H."/>
            <person name="Pitluck S."/>
            <person name="Clum A."/>
            <person name="Schmutz J."/>
            <person name="Larimer F."/>
            <person name="Land M."/>
            <person name="Hauser L."/>
            <person name="Kyrpides N."/>
            <person name="Anderson I."/>
            <person name="Sieprawska-Lupa M."/>
            <person name="Whitman W.B."/>
            <person name="Richardson P."/>
        </authorList>
    </citation>
    <scope>NUCLEOTIDE SEQUENCE [LARGE SCALE GENOMIC DNA]</scope>
    <source>
        <strain>C7 / ATCC BAA-1331</strain>
    </source>
</reference>
<sequence>MAKEKPILNVAFIGHVDAGKSTTVGRLLLDGGAIDPQLIVRLRKEAEEKGKAGFEFAYVMDGLKEERERGVTIDVAHKKFPTAKYEVTIVDCPGHRDFIKNMITGASQADAAILVVNVDDAKSGIQPQTREHVFLSRTLGISQLAVAINKMDTVNFSEADYNEMKKMLGDQLLKMVGFNPDNITFVPVASLHGDNVFKKSDKTPWYNGPTLAEVIDAFQPPEKPTTLPLRLPIQDVYSITGVGTVPVGRVETGIIRPGDKVIFEPAGAVGEIKTVEMHHEQLPSAEPGDNIGFNVRGVGKKDIKRGDVLGHTTNPPTVAADFTAQIVVLQHPSVMTVGYTPVFHAHTAQIACTFMELQKKLNPATGEVLEENPDFLKAGDAAIVKLMPTKPLVIESVKEIPQLGRFAIRDMGMTVAAGMAIQVTAKNK</sequence>
<feature type="chain" id="PRO_1000015691" description="Elongation factor 1-alpha">
    <location>
        <begin position="1"/>
        <end position="428"/>
    </location>
</feature>
<feature type="domain" description="tr-type G">
    <location>
        <begin position="5"/>
        <end position="225"/>
    </location>
</feature>
<feature type="region of interest" description="G1" evidence="1">
    <location>
        <begin position="14"/>
        <end position="21"/>
    </location>
</feature>
<feature type="region of interest" description="G2" evidence="1">
    <location>
        <begin position="70"/>
        <end position="74"/>
    </location>
</feature>
<feature type="region of interest" description="G3" evidence="1">
    <location>
        <begin position="91"/>
        <end position="94"/>
    </location>
</feature>
<feature type="region of interest" description="G4" evidence="1">
    <location>
        <begin position="149"/>
        <end position="152"/>
    </location>
</feature>
<feature type="region of interest" description="G5" evidence="1">
    <location>
        <begin position="189"/>
        <end position="191"/>
    </location>
</feature>
<feature type="binding site" evidence="2">
    <location>
        <begin position="14"/>
        <end position="21"/>
    </location>
    <ligand>
        <name>GTP</name>
        <dbReference type="ChEBI" id="CHEBI:37565"/>
    </ligand>
</feature>
<feature type="binding site" evidence="2">
    <location>
        <position position="21"/>
    </location>
    <ligand>
        <name>Mg(2+)</name>
        <dbReference type="ChEBI" id="CHEBI:18420"/>
    </ligand>
</feature>
<feature type="binding site" evidence="2">
    <location>
        <begin position="91"/>
        <end position="95"/>
    </location>
    <ligand>
        <name>GTP</name>
        <dbReference type="ChEBI" id="CHEBI:37565"/>
    </ligand>
</feature>
<feature type="binding site" evidence="2">
    <location>
        <begin position="149"/>
        <end position="152"/>
    </location>
    <ligand>
        <name>GTP</name>
        <dbReference type="ChEBI" id="CHEBI:37565"/>
    </ligand>
</feature>
<name>EF1A_METM7</name>
<gene>
    <name evidence="2" type="primary">tuf</name>
    <name type="ordered locus">MmarC7_0615</name>
</gene>
<evidence type="ECO:0000250" key="1"/>
<evidence type="ECO:0000255" key="2">
    <source>
        <dbReference type="HAMAP-Rule" id="MF_00118"/>
    </source>
</evidence>
<keyword id="KW-0963">Cytoplasm</keyword>
<keyword id="KW-0251">Elongation factor</keyword>
<keyword id="KW-0342">GTP-binding</keyword>
<keyword id="KW-0378">Hydrolase</keyword>
<keyword id="KW-0460">Magnesium</keyword>
<keyword id="KW-0479">Metal-binding</keyword>
<keyword id="KW-0547">Nucleotide-binding</keyword>
<keyword id="KW-0648">Protein biosynthesis</keyword>
<comment type="function">
    <text evidence="2">GTP hydrolase that promotes the GTP-dependent binding of aminoacyl-tRNA to the A-site of ribosomes during protein biosynthesis.</text>
</comment>
<comment type="catalytic activity">
    <reaction evidence="2">
        <text>GTP + H2O = GDP + phosphate + H(+)</text>
        <dbReference type="Rhea" id="RHEA:19669"/>
        <dbReference type="ChEBI" id="CHEBI:15377"/>
        <dbReference type="ChEBI" id="CHEBI:15378"/>
        <dbReference type="ChEBI" id="CHEBI:37565"/>
        <dbReference type="ChEBI" id="CHEBI:43474"/>
        <dbReference type="ChEBI" id="CHEBI:58189"/>
        <dbReference type="EC" id="3.6.5.3"/>
    </reaction>
    <physiologicalReaction direction="left-to-right" evidence="2">
        <dbReference type="Rhea" id="RHEA:19670"/>
    </physiologicalReaction>
</comment>
<comment type="subcellular location">
    <subcellularLocation>
        <location evidence="2">Cytoplasm</location>
    </subcellularLocation>
</comment>
<comment type="similarity">
    <text evidence="2">Belongs to the TRAFAC class translation factor GTPase superfamily. Classic translation factor GTPase family. EF-Tu/EF-1A subfamily.</text>
</comment>